<dbReference type="EMBL" id="CP000267">
    <property type="protein sequence ID" value="ABD69694.1"/>
    <property type="molecule type" value="Genomic_DNA"/>
</dbReference>
<dbReference type="RefSeq" id="WP_011464262.1">
    <property type="nucleotide sequence ID" value="NC_007908.1"/>
</dbReference>
<dbReference type="SMR" id="Q21X09"/>
<dbReference type="STRING" id="338969.Rfer_1969"/>
<dbReference type="KEGG" id="rfr:Rfer_1969"/>
<dbReference type="eggNOG" id="COG0443">
    <property type="taxonomic scope" value="Bacteria"/>
</dbReference>
<dbReference type="HOGENOM" id="CLU_005965_2_1_4"/>
<dbReference type="OrthoDB" id="9766019at2"/>
<dbReference type="Proteomes" id="UP000008332">
    <property type="component" value="Chromosome"/>
</dbReference>
<dbReference type="GO" id="GO:0005524">
    <property type="term" value="F:ATP binding"/>
    <property type="evidence" value="ECO:0007669"/>
    <property type="project" value="UniProtKB-UniRule"/>
</dbReference>
<dbReference type="GO" id="GO:0140662">
    <property type="term" value="F:ATP-dependent protein folding chaperone"/>
    <property type="evidence" value="ECO:0007669"/>
    <property type="project" value="InterPro"/>
</dbReference>
<dbReference type="GO" id="GO:0051082">
    <property type="term" value="F:unfolded protein binding"/>
    <property type="evidence" value="ECO:0007669"/>
    <property type="project" value="InterPro"/>
</dbReference>
<dbReference type="CDD" id="cd10234">
    <property type="entry name" value="ASKHA_NBD_HSP70_DnaK-like"/>
    <property type="match status" value="1"/>
</dbReference>
<dbReference type="FunFam" id="2.60.34.10:FF:000014">
    <property type="entry name" value="Chaperone protein DnaK HSP70"/>
    <property type="match status" value="1"/>
</dbReference>
<dbReference type="FunFam" id="1.20.1270.10:FF:000001">
    <property type="entry name" value="Molecular chaperone DnaK"/>
    <property type="match status" value="1"/>
</dbReference>
<dbReference type="FunFam" id="3.30.420.40:FF:000004">
    <property type="entry name" value="Molecular chaperone DnaK"/>
    <property type="match status" value="1"/>
</dbReference>
<dbReference type="FunFam" id="3.90.640.10:FF:000003">
    <property type="entry name" value="Molecular chaperone DnaK"/>
    <property type="match status" value="1"/>
</dbReference>
<dbReference type="Gene3D" id="1.20.1270.10">
    <property type="match status" value="1"/>
</dbReference>
<dbReference type="Gene3D" id="3.30.420.40">
    <property type="match status" value="2"/>
</dbReference>
<dbReference type="Gene3D" id="3.90.640.10">
    <property type="entry name" value="Actin, Chain A, domain 4"/>
    <property type="match status" value="1"/>
</dbReference>
<dbReference type="Gene3D" id="2.60.34.10">
    <property type="entry name" value="Substrate Binding Domain Of DNAk, Chain A, domain 1"/>
    <property type="match status" value="1"/>
</dbReference>
<dbReference type="HAMAP" id="MF_00332">
    <property type="entry name" value="DnaK"/>
    <property type="match status" value="1"/>
</dbReference>
<dbReference type="InterPro" id="IPR043129">
    <property type="entry name" value="ATPase_NBD"/>
</dbReference>
<dbReference type="InterPro" id="IPR012725">
    <property type="entry name" value="Chaperone_DnaK"/>
</dbReference>
<dbReference type="InterPro" id="IPR018181">
    <property type="entry name" value="Heat_shock_70_CS"/>
</dbReference>
<dbReference type="InterPro" id="IPR029048">
    <property type="entry name" value="HSP70_C_sf"/>
</dbReference>
<dbReference type="InterPro" id="IPR029047">
    <property type="entry name" value="HSP70_peptide-bd_sf"/>
</dbReference>
<dbReference type="InterPro" id="IPR013126">
    <property type="entry name" value="Hsp_70_fam"/>
</dbReference>
<dbReference type="NCBIfam" id="NF001413">
    <property type="entry name" value="PRK00290.1"/>
    <property type="match status" value="1"/>
</dbReference>
<dbReference type="NCBIfam" id="NF003520">
    <property type="entry name" value="PRK05183.1"/>
    <property type="match status" value="1"/>
</dbReference>
<dbReference type="NCBIfam" id="TIGR02350">
    <property type="entry name" value="prok_dnaK"/>
    <property type="match status" value="1"/>
</dbReference>
<dbReference type="PANTHER" id="PTHR19375">
    <property type="entry name" value="HEAT SHOCK PROTEIN 70KDA"/>
    <property type="match status" value="1"/>
</dbReference>
<dbReference type="Pfam" id="PF00012">
    <property type="entry name" value="HSP70"/>
    <property type="match status" value="1"/>
</dbReference>
<dbReference type="PRINTS" id="PR00301">
    <property type="entry name" value="HEATSHOCK70"/>
</dbReference>
<dbReference type="SUPFAM" id="SSF53067">
    <property type="entry name" value="Actin-like ATPase domain"/>
    <property type="match status" value="2"/>
</dbReference>
<dbReference type="SUPFAM" id="SSF100934">
    <property type="entry name" value="Heat shock protein 70kD (HSP70), C-terminal subdomain"/>
    <property type="match status" value="1"/>
</dbReference>
<dbReference type="SUPFAM" id="SSF100920">
    <property type="entry name" value="Heat shock protein 70kD (HSP70), peptide-binding domain"/>
    <property type="match status" value="1"/>
</dbReference>
<dbReference type="PROSITE" id="PS00297">
    <property type="entry name" value="HSP70_1"/>
    <property type="match status" value="1"/>
</dbReference>
<dbReference type="PROSITE" id="PS00329">
    <property type="entry name" value="HSP70_2"/>
    <property type="match status" value="1"/>
</dbReference>
<dbReference type="PROSITE" id="PS01036">
    <property type="entry name" value="HSP70_3"/>
    <property type="match status" value="1"/>
</dbReference>
<name>DNAK_ALBFT</name>
<comment type="function">
    <text evidence="1">Acts as a chaperone.</text>
</comment>
<comment type="induction">
    <text evidence="1">By stress conditions e.g. heat shock.</text>
</comment>
<comment type="similarity">
    <text evidence="1">Belongs to the heat shock protein 70 family.</text>
</comment>
<keyword id="KW-0067">ATP-binding</keyword>
<keyword id="KW-0143">Chaperone</keyword>
<keyword id="KW-0547">Nucleotide-binding</keyword>
<keyword id="KW-0597">Phosphoprotein</keyword>
<keyword id="KW-1185">Reference proteome</keyword>
<keyword id="KW-0346">Stress response</keyword>
<accession>Q21X09</accession>
<gene>
    <name evidence="1" type="primary">dnaK</name>
    <name type="ordered locus">Rfer_1969</name>
</gene>
<organism>
    <name type="scientific">Albidiferax ferrireducens (strain ATCC BAA-621 / DSM 15236 / T118)</name>
    <name type="common">Rhodoferax ferrireducens</name>
    <dbReference type="NCBI Taxonomy" id="338969"/>
    <lineage>
        <taxon>Bacteria</taxon>
        <taxon>Pseudomonadati</taxon>
        <taxon>Pseudomonadota</taxon>
        <taxon>Betaproteobacteria</taxon>
        <taxon>Burkholderiales</taxon>
        <taxon>Comamonadaceae</taxon>
        <taxon>Rhodoferax</taxon>
    </lineage>
</organism>
<reference key="1">
    <citation type="submission" date="2006-02" db="EMBL/GenBank/DDBJ databases">
        <title>Complete sequence of chromosome of Rhodoferax ferrireducens DSM 15236.</title>
        <authorList>
            <person name="Copeland A."/>
            <person name="Lucas S."/>
            <person name="Lapidus A."/>
            <person name="Barry K."/>
            <person name="Detter J.C."/>
            <person name="Glavina del Rio T."/>
            <person name="Hammon N."/>
            <person name="Israni S."/>
            <person name="Pitluck S."/>
            <person name="Brettin T."/>
            <person name="Bruce D."/>
            <person name="Han C."/>
            <person name="Tapia R."/>
            <person name="Gilna P."/>
            <person name="Kiss H."/>
            <person name="Schmutz J."/>
            <person name="Larimer F."/>
            <person name="Land M."/>
            <person name="Kyrpides N."/>
            <person name="Ivanova N."/>
            <person name="Richardson P."/>
        </authorList>
    </citation>
    <scope>NUCLEOTIDE SEQUENCE [LARGE SCALE GENOMIC DNA]</scope>
    <source>
        <strain>ATCC BAA-621 / DSM 15236 / T118</strain>
    </source>
</reference>
<protein>
    <recommendedName>
        <fullName evidence="1">Chaperone protein DnaK</fullName>
    </recommendedName>
    <alternativeName>
        <fullName evidence="1">HSP70</fullName>
    </alternativeName>
    <alternativeName>
        <fullName evidence="1">Heat shock 70 kDa protein</fullName>
    </alternativeName>
    <alternativeName>
        <fullName evidence="1">Heat shock protein 70</fullName>
    </alternativeName>
</protein>
<proteinExistence type="inferred from homology"/>
<feature type="chain" id="PRO_1000059642" description="Chaperone protein DnaK">
    <location>
        <begin position="1"/>
        <end position="651"/>
    </location>
</feature>
<feature type="region of interest" description="Disordered" evidence="2">
    <location>
        <begin position="608"/>
        <end position="651"/>
    </location>
</feature>
<feature type="compositionally biased region" description="Low complexity" evidence="2">
    <location>
        <begin position="611"/>
        <end position="636"/>
    </location>
</feature>
<feature type="modified residue" description="Phosphothreonine; by autocatalysis" evidence="1">
    <location>
        <position position="200"/>
    </location>
</feature>
<evidence type="ECO:0000255" key="1">
    <source>
        <dbReference type="HAMAP-Rule" id="MF_00332"/>
    </source>
</evidence>
<evidence type="ECO:0000256" key="2">
    <source>
        <dbReference type="SAM" id="MobiDB-lite"/>
    </source>
</evidence>
<sequence>MGRIIGIDLGTTNSCVAIMEGNTPKVIENSEGARTTPSIIAYQEDGEVLVGASAKRQAVTNPKNTLYAVKRLIGRKFTEKEVQKDINLMPYKIAAADNGDAWVEVRGNRMAPQQVSADVLRKMKKTAEDYLGETVTEAVITVPAYFNDAQRQATKDAGRIAGLDVKRIINEPTAAALAYGLDKTEKGDRKIAVFDLGGGTFDVSIIEIADVDGEKQFEVLSTNGDTFLGGEDFDQRIIDFVIAEFKKEQGVDLGKDVLALQRLKEAAEKAKIELSSSAQTDINLPYVTADASGPKHLSIKLTRAKLESLVEELIERTIAPCRTAIKDAGVNVADINDVILVGGMTRMPKVQEKVKELFGREPRKDVNPDEAVAVGAAIQGQVLSGDRKDVLLLDVTPLSLGIETLGGVMTKMITKNTTIPTKFAQTFSTADDNQPAVTIKVFQGEREIAAGNKMLGEFNLEGIPPSARGTPQIEVSFDIDANGILHVGAKDKGTGKENKITIKANSGLTEAEIQQMVKDAELNAADDKRKLDLVQAKNQADASLHSVKKSLTEYGDKLEAGEKEKIEEAIKHLEEAIKGDDKAHIEEKSTALMTISQKLGEKMYADMQAKQAAEAGAGDPGAQAAAGAQNTSNQAADDNVVDAEVKEVKKG</sequence>